<gene>
    <name evidence="3" type="primary">AAT1RGB</name>
</gene>
<feature type="chain" id="PRO_0000451709" description="Alcohol acyl transferase 1 allele RGb">
    <location>
        <begin position="1"/>
        <end position="455"/>
    </location>
</feature>
<feature type="active site" description="Proton acceptor" evidence="2">
    <location>
        <position position="164"/>
    </location>
</feature>
<feature type="active site" description="Proton acceptor" evidence="2">
    <location>
        <position position="385"/>
    </location>
</feature>
<accession>V9P9L8</accession>
<proteinExistence type="inferred from homology"/>
<name>ATRGB_MALDO</name>
<sequence>MMSFSVLQVKRLQPELITPAKSTPQETKFLSDIDDQESLRVQIPIIMCYKDNPSLNKNRNPVKAIREALSRALVYYYPLAGRLREGPNRKLVVDCNGEGILFVEASADVTLEQLGDKILPPCPLLEEFLYNFPGSDGIIDCPLLLIQVTCLTCGGFILALRLNHTMCDAFGLLQFLTAIAEMARGAHAPSILPVWERELLFARNPPRITCAHHEYEDVIDHSDGSYTSSNQSNMVQRSFYFGAKEMRVLRKQIPRHLISTCSTFDLITACLWKCRTLALKINPKQAVRVSCTVNARGKHHNVRLPLGYYGNAFAFPAAVSKAEPLCKNPMGYALELVKKAKATMNEEYLRSVADLLVLRGRPQYSSTGSYLIVSDNTRAGFGDVNFGWGQPVFAGPAKALDLVSFYVQHKNNTEDGILVPMCLPSSAMERFQQEFEMITQEPKEDICNNLRSTSQ</sequence>
<dbReference type="EC" id="2.3.1.-" evidence="1"/>
<dbReference type="EMBL" id="KC291130">
    <property type="protein sequence ID" value="AGW30201.1"/>
    <property type="molecule type" value="Genomic_DNA"/>
</dbReference>
<dbReference type="SMR" id="V9P9L8"/>
<dbReference type="GO" id="GO:0016746">
    <property type="term" value="F:acyltransferase activity"/>
    <property type="evidence" value="ECO:0000250"/>
    <property type="project" value="UniProtKB"/>
</dbReference>
<dbReference type="GO" id="GO:0006066">
    <property type="term" value="P:alcohol metabolic process"/>
    <property type="evidence" value="ECO:0000250"/>
    <property type="project" value="UniProtKB"/>
</dbReference>
<dbReference type="GO" id="GO:0009836">
    <property type="term" value="P:fruit ripening, climacteric"/>
    <property type="evidence" value="ECO:0007669"/>
    <property type="project" value="UniProtKB-ARBA"/>
</dbReference>
<dbReference type="Gene3D" id="3.30.559.10">
    <property type="entry name" value="Chloramphenicol acetyltransferase-like domain"/>
    <property type="match status" value="2"/>
</dbReference>
<dbReference type="InterPro" id="IPR023213">
    <property type="entry name" value="CAT-like_dom_sf"/>
</dbReference>
<dbReference type="InterPro" id="IPR050898">
    <property type="entry name" value="Plant_acyltransferase"/>
</dbReference>
<dbReference type="PANTHER" id="PTHR31147">
    <property type="entry name" value="ACYL TRANSFERASE 4"/>
    <property type="match status" value="1"/>
</dbReference>
<dbReference type="PANTHER" id="PTHR31147:SF66">
    <property type="entry name" value="OS05G0315700 PROTEIN"/>
    <property type="match status" value="1"/>
</dbReference>
<dbReference type="Pfam" id="PF02458">
    <property type="entry name" value="Transferase"/>
    <property type="match status" value="1"/>
</dbReference>
<organism>
    <name type="scientific">Malus domestica</name>
    <name type="common">Apple</name>
    <name type="synonym">Pyrus malus</name>
    <dbReference type="NCBI Taxonomy" id="3750"/>
    <lineage>
        <taxon>Eukaryota</taxon>
        <taxon>Viridiplantae</taxon>
        <taxon>Streptophyta</taxon>
        <taxon>Embryophyta</taxon>
        <taxon>Tracheophyta</taxon>
        <taxon>Spermatophyta</taxon>
        <taxon>Magnoliopsida</taxon>
        <taxon>eudicotyledons</taxon>
        <taxon>Gunneridae</taxon>
        <taxon>Pentapetalae</taxon>
        <taxon>rosids</taxon>
        <taxon>fabids</taxon>
        <taxon>Rosales</taxon>
        <taxon>Rosaceae</taxon>
        <taxon>Amygdaloideae</taxon>
        <taxon>Maleae</taxon>
        <taxon>Malus</taxon>
    </lineage>
</organism>
<evidence type="ECO:0000250" key="1">
    <source>
        <dbReference type="UniProtKB" id="Q64FJ6"/>
    </source>
</evidence>
<evidence type="ECO:0000250" key="2">
    <source>
        <dbReference type="UniProtKB" id="Q9FI78"/>
    </source>
</evidence>
<evidence type="ECO:0000303" key="3">
    <source>
    </source>
</evidence>
<evidence type="ECO:0000305" key="4"/>
<evidence type="ECO:0000305" key="5">
    <source>
    </source>
</evidence>
<protein>
    <recommendedName>
        <fullName evidence="3">Alcohol acyl transferase 1 allele RGb</fullName>
        <shortName evidence="3">AAT1-RGb</shortName>
        <ecNumber evidence="1">2.3.1.-</ecNumber>
    </recommendedName>
</protein>
<keyword id="KW-0808">Transferase</keyword>
<reference key="1">
    <citation type="journal article" date="2014" name="Plant J.">
        <title>The AAT1 locus is critical for the biosynthesis of esters contributing to 'ripe apple' flavour in 'Royal Gala' and 'Granny Smith' apples.</title>
        <authorList>
            <person name="Souleyre E.J.F."/>
            <person name="Chagne D."/>
            <person name="Chen X."/>
            <person name="Tomes S."/>
            <person name="Turner R.M."/>
            <person name="Wang M.Y."/>
            <person name="Maddumage R."/>
            <person name="Hunt M.B."/>
            <person name="Winz R.A."/>
            <person name="Wiedow C."/>
            <person name="Hamiaux C."/>
            <person name="Gardiner S.E."/>
            <person name="Rowan D.D."/>
            <person name="Atkinson R.G."/>
        </authorList>
    </citation>
    <scope>NUCLEOTIDE SEQUENCE [GENOMIC DNA]</scope>
    <scope>GENE FAMILY</scope>
    <scope>NOMENCLATURE</scope>
    <source>
        <strain>cv. Royal Gala</strain>
    </source>
</reference>
<comment type="function">
    <text evidence="1">Involved in the biosynthesis of volatile esters which confer ripe apple fruit flavor (By similarity). Alcohol acyl transferase that can use a wide range of alcohols as substrate to produce esters (By similarity).</text>
</comment>
<comment type="miscellaneous">
    <text evidence="5">The fruit of cv. Royal Gala exhibits a high ester accumulation, whereas the cv. Granny Smith contains low ester levels; this influences strongly the ripe apple fruit aroma.</text>
</comment>
<comment type="similarity">
    <text evidence="4">Belongs to the plant acyltransferase family.</text>
</comment>